<keyword id="KW-0066">ATP synthesis</keyword>
<keyword id="KW-0067">ATP-binding</keyword>
<keyword id="KW-0997">Cell inner membrane</keyword>
<keyword id="KW-1003">Cell membrane</keyword>
<keyword id="KW-0139">CF(1)</keyword>
<keyword id="KW-0375">Hydrogen ion transport</keyword>
<keyword id="KW-0406">Ion transport</keyword>
<keyword id="KW-0472">Membrane</keyword>
<keyword id="KW-0547">Nucleotide-binding</keyword>
<keyword id="KW-1278">Translocase</keyword>
<keyword id="KW-0813">Transport</keyword>
<proteinExistence type="inferred from homology"/>
<feature type="chain" id="PRO_1000143434" description="ATP synthase subunit alpha">
    <location>
        <begin position="1"/>
        <end position="513"/>
    </location>
</feature>
<feature type="binding site" evidence="1">
    <location>
        <begin position="169"/>
        <end position="176"/>
    </location>
    <ligand>
        <name>ATP</name>
        <dbReference type="ChEBI" id="CHEBI:30616"/>
    </ligand>
</feature>
<feature type="site" description="Required for activity" evidence="1">
    <location>
        <position position="373"/>
    </location>
</feature>
<comment type="function">
    <text evidence="1">Produces ATP from ADP in the presence of a proton gradient across the membrane. The alpha chain is a regulatory subunit.</text>
</comment>
<comment type="catalytic activity">
    <reaction evidence="1">
        <text>ATP + H2O + 4 H(+)(in) = ADP + phosphate + 5 H(+)(out)</text>
        <dbReference type="Rhea" id="RHEA:57720"/>
        <dbReference type="ChEBI" id="CHEBI:15377"/>
        <dbReference type="ChEBI" id="CHEBI:15378"/>
        <dbReference type="ChEBI" id="CHEBI:30616"/>
        <dbReference type="ChEBI" id="CHEBI:43474"/>
        <dbReference type="ChEBI" id="CHEBI:456216"/>
        <dbReference type="EC" id="7.1.2.2"/>
    </reaction>
</comment>
<comment type="subunit">
    <text evidence="1">F-type ATPases have 2 components, CF(1) - the catalytic core - and CF(0) - the membrane proton channel. CF(1) has five subunits: alpha(3), beta(3), gamma(1), delta(1), epsilon(1). CF(0) has three main subunits: a(1), b(2) and c(9-12). The alpha and beta chains form an alternating ring which encloses part of the gamma chain. CF(1) is attached to CF(0) by a central stalk formed by the gamma and epsilon chains, while a peripheral stalk is formed by the delta and b chains.</text>
</comment>
<comment type="subcellular location">
    <subcellularLocation>
        <location evidence="1">Cell inner membrane</location>
        <topology evidence="1">Peripheral membrane protein</topology>
    </subcellularLocation>
</comment>
<comment type="similarity">
    <text evidence="1">Belongs to the ATPase alpha/beta chains family.</text>
</comment>
<reference key="1">
    <citation type="journal article" date="2009" name="BMC Genomics">
        <title>Pseudogene accumulation in the evolutionary histories of Salmonella enterica serovars Paratyphi A and Typhi.</title>
        <authorList>
            <person name="Holt K.E."/>
            <person name="Thomson N.R."/>
            <person name="Wain J."/>
            <person name="Langridge G.C."/>
            <person name="Hasan R."/>
            <person name="Bhutta Z.A."/>
            <person name="Quail M.A."/>
            <person name="Norbertczak H."/>
            <person name="Walker D."/>
            <person name="Simmonds M."/>
            <person name="White B."/>
            <person name="Bason N."/>
            <person name="Mungall K."/>
            <person name="Dougan G."/>
            <person name="Parkhill J."/>
        </authorList>
    </citation>
    <scope>NUCLEOTIDE SEQUENCE [LARGE SCALE GENOMIC DNA]</scope>
    <source>
        <strain>AKU_12601</strain>
    </source>
</reference>
<name>ATPA_SALPK</name>
<organism>
    <name type="scientific">Salmonella paratyphi A (strain AKU_12601)</name>
    <dbReference type="NCBI Taxonomy" id="554290"/>
    <lineage>
        <taxon>Bacteria</taxon>
        <taxon>Pseudomonadati</taxon>
        <taxon>Pseudomonadota</taxon>
        <taxon>Gammaproteobacteria</taxon>
        <taxon>Enterobacterales</taxon>
        <taxon>Enterobacteriaceae</taxon>
        <taxon>Salmonella</taxon>
    </lineage>
</organism>
<accession>B5BIN8</accession>
<evidence type="ECO:0000255" key="1">
    <source>
        <dbReference type="HAMAP-Rule" id="MF_01346"/>
    </source>
</evidence>
<dbReference type="EC" id="7.1.2.2" evidence="1"/>
<dbReference type="EMBL" id="FM200053">
    <property type="protein sequence ID" value="CAR61736.1"/>
    <property type="molecule type" value="Genomic_DNA"/>
</dbReference>
<dbReference type="RefSeq" id="WP_001176751.1">
    <property type="nucleotide sequence ID" value="NC_011147.1"/>
</dbReference>
<dbReference type="SMR" id="B5BIN8"/>
<dbReference type="GeneID" id="66758156"/>
<dbReference type="KEGG" id="sek:SSPA3461"/>
<dbReference type="HOGENOM" id="CLU_010091_2_1_6"/>
<dbReference type="Proteomes" id="UP000001869">
    <property type="component" value="Chromosome"/>
</dbReference>
<dbReference type="GO" id="GO:0005886">
    <property type="term" value="C:plasma membrane"/>
    <property type="evidence" value="ECO:0007669"/>
    <property type="project" value="UniProtKB-SubCell"/>
</dbReference>
<dbReference type="GO" id="GO:0045259">
    <property type="term" value="C:proton-transporting ATP synthase complex"/>
    <property type="evidence" value="ECO:0007669"/>
    <property type="project" value="UniProtKB-KW"/>
</dbReference>
<dbReference type="GO" id="GO:0043531">
    <property type="term" value="F:ADP binding"/>
    <property type="evidence" value="ECO:0007669"/>
    <property type="project" value="TreeGrafter"/>
</dbReference>
<dbReference type="GO" id="GO:0005524">
    <property type="term" value="F:ATP binding"/>
    <property type="evidence" value="ECO:0007669"/>
    <property type="project" value="UniProtKB-UniRule"/>
</dbReference>
<dbReference type="GO" id="GO:0046933">
    <property type="term" value="F:proton-transporting ATP synthase activity, rotational mechanism"/>
    <property type="evidence" value="ECO:0007669"/>
    <property type="project" value="UniProtKB-UniRule"/>
</dbReference>
<dbReference type="CDD" id="cd18113">
    <property type="entry name" value="ATP-synt_F1_alpha_C"/>
    <property type="match status" value="1"/>
</dbReference>
<dbReference type="CDD" id="cd18116">
    <property type="entry name" value="ATP-synt_F1_alpha_N"/>
    <property type="match status" value="1"/>
</dbReference>
<dbReference type="CDD" id="cd01132">
    <property type="entry name" value="F1-ATPase_alpha_CD"/>
    <property type="match status" value="1"/>
</dbReference>
<dbReference type="FunFam" id="1.20.150.20:FF:000001">
    <property type="entry name" value="ATP synthase subunit alpha"/>
    <property type="match status" value="1"/>
</dbReference>
<dbReference type="FunFam" id="2.40.30.20:FF:000001">
    <property type="entry name" value="ATP synthase subunit alpha"/>
    <property type="match status" value="1"/>
</dbReference>
<dbReference type="FunFam" id="3.40.50.300:FF:000002">
    <property type="entry name" value="ATP synthase subunit alpha"/>
    <property type="match status" value="1"/>
</dbReference>
<dbReference type="Gene3D" id="2.40.30.20">
    <property type="match status" value="1"/>
</dbReference>
<dbReference type="Gene3D" id="1.20.150.20">
    <property type="entry name" value="ATP synthase alpha/beta chain, C-terminal domain"/>
    <property type="match status" value="1"/>
</dbReference>
<dbReference type="Gene3D" id="3.40.50.300">
    <property type="entry name" value="P-loop containing nucleotide triphosphate hydrolases"/>
    <property type="match status" value="1"/>
</dbReference>
<dbReference type="HAMAP" id="MF_01346">
    <property type="entry name" value="ATP_synth_alpha_bact"/>
    <property type="match status" value="1"/>
</dbReference>
<dbReference type="InterPro" id="IPR023366">
    <property type="entry name" value="ATP_synth_asu-like_sf"/>
</dbReference>
<dbReference type="InterPro" id="IPR000793">
    <property type="entry name" value="ATP_synth_asu_C"/>
</dbReference>
<dbReference type="InterPro" id="IPR038376">
    <property type="entry name" value="ATP_synth_asu_C_sf"/>
</dbReference>
<dbReference type="InterPro" id="IPR033732">
    <property type="entry name" value="ATP_synth_F1_a_nt-bd_dom"/>
</dbReference>
<dbReference type="InterPro" id="IPR005294">
    <property type="entry name" value="ATP_synth_F1_asu"/>
</dbReference>
<dbReference type="InterPro" id="IPR020003">
    <property type="entry name" value="ATPase_a/bsu_AS"/>
</dbReference>
<dbReference type="InterPro" id="IPR004100">
    <property type="entry name" value="ATPase_F1/V1/A1_a/bsu_N"/>
</dbReference>
<dbReference type="InterPro" id="IPR036121">
    <property type="entry name" value="ATPase_F1/V1/A1_a/bsu_N_sf"/>
</dbReference>
<dbReference type="InterPro" id="IPR000194">
    <property type="entry name" value="ATPase_F1/V1/A1_a/bsu_nucl-bd"/>
</dbReference>
<dbReference type="InterPro" id="IPR027417">
    <property type="entry name" value="P-loop_NTPase"/>
</dbReference>
<dbReference type="NCBIfam" id="TIGR00962">
    <property type="entry name" value="atpA"/>
    <property type="match status" value="1"/>
</dbReference>
<dbReference type="NCBIfam" id="NF009884">
    <property type="entry name" value="PRK13343.1"/>
    <property type="match status" value="1"/>
</dbReference>
<dbReference type="PANTHER" id="PTHR48082">
    <property type="entry name" value="ATP SYNTHASE SUBUNIT ALPHA, MITOCHONDRIAL"/>
    <property type="match status" value="1"/>
</dbReference>
<dbReference type="PANTHER" id="PTHR48082:SF2">
    <property type="entry name" value="ATP SYNTHASE SUBUNIT ALPHA, MITOCHONDRIAL"/>
    <property type="match status" value="1"/>
</dbReference>
<dbReference type="Pfam" id="PF00006">
    <property type="entry name" value="ATP-synt_ab"/>
    <property type="match status" value="1"/>
</dbReference>
<dbReference type="Pfam" id="PF00306">
    <property type="entry name" value="ATP-synt_ab_C"/>
    <property type="match status" value="1"/>
</dbReference>
<dbReference type="Pfam" id="PF02874">
    <property type="entry name" value="ATP-synt_ab_N"/>
    <property type="match status" value="1"/>
</dbReference>
<dbReference type="SUPFAM" id="SSF47917">
    <property type="entry name" value="C-terminal domain of alpha and beta subunits of F1 ATP synthase"/>
    <property type="match status" value="1"/>
</dbReference>
<dbReference type="SUPFAM" id="SSF50615">
    <property type="entry name" value="N-terminal domain of alpha and beta subunits of F1 ATP synthase"/>
    <property type="match status" value="1"/>
</dbReference>
<dbReference type="SUPFAM" id="SSF52540">
    <property type="entry name" value="P-loop containing nucleoside triphosphate hydrolases"/>
    <property type="match status" value="1"/>
</dbReference>
<dbReference type="PROSITE" id="PS00152">
    <property type="entry name" value="ATPASE_ALPHA_BETA"/>
    <property type="match status" value="1"/>
</dbReference>
<gene>
    <name evidence="1" type="primary">atpA</name>
    <name type="ordered locus">SSPA3461</name>
</gene>
<protein>
    <recommendedName>
        <fullName evidence="1">ATP synthase subunit alpha</fullName>
        <ecNumber evidence="1">7.1.2.2</ecNumber>
    </recommendedName>
    <alternativeName>
        <fullName evidence="1">ATP synthase F1 sector subunit alpha</fullName>
    </alternativeName>
    <alternativeName>
        <fullName evidence="1">F-ATPase subunit alpha</fullName>
    </alternativeName>
</protein>
<sequence length="513" mass="55113">MQLNSTEISELIKQRIAQFNVVSEAHNEGTIVSVSDGVIRIHGLADCMQGEMISLPGNRYAIALNLERDSVGAVVMGPYADLAEGMKVKCTGRILEVPVGRGLLGRVVNTLGAPIDGKGPVDNDGFSAVEAIAPGVIDRQSVDQPVQTGYKAVDSMIPIGRGQRELIIGDRQTGKTALAIDAIINQRDSGIKCIYVAIGQKASTISNVVRKLEEHGALANTIVVVATASESAALQYLAPYAGCAMGEYFRDRGEDALIIYDDLSKQAVAYRQISLLLRRPPGREAFPGDVFYLHSRLLERAARVNADYVEAFTKGEVKGKTGSLTALPIIETQAGDVSAFVPTNVISITDGQIFLESNLFNAGIRPAVNPGISVSRVGGAAQTKIMKKLSGGIRTALAQYRELAAFSQFASDLDDATRKQLDHGQKVTELLKQKQYAPMSVAQQSLVLFAAERGYLADVELAKIGSFEAALLAYVDRDHAPLMQEINQSGGYNDEIEGKLKGILDSFKATQSW</sequence>